<keyword id="KW-0274">FAD</keyword>
<keyword id="KW-0285">Flavoprotein</keyword>
<keyword id="KW-0560">Oxidoreductase</keyword>
<keyword id="KW-0816">Tricarboxylic acid cycle</keyword>
<feature type="chain" id="PRO_1000099884" description="Probable malate:quinone oxidoreductase">
    <location>
        <begin position="1"/>
        <end position="562"/>
    </location>
</feature>
<feature type="region of interest" description="Disordered" evidence="2">
    <location>
        <begin position="530"/>
        <end position="562"/>
    </location>
</feature>
<feature type="compositionally biased region" description="Polar residues" evidence="2">
    <location>
        <begin position="551"/>
        <end position="562"/>
    </location>
</feature>
<protein>
    <recommendedName>
        <fullName evidence="1">Probable malate:quinone oxidoreductase</fullName>
        <ecNumber evidence="1">1.1.5.4</ecNumber>
    </recommendedName>
    <alternativeName>
        <fullName evidence="1">MQO</fullName>
    </alternativeName>
    <alternativeName>
        <fullName evidence="1">Malate dehydrogenase [quinone]</fullName>
    </alternativeName>
</protein>
<sequence length="562" mass="62582">MKKSLKGLTGLIVAFALATLLFLYWPLYQRSVPKANNDTPVDVVLIGGGIMSVTLGTYLQELQPDWKIELFERLNGIAQESSDGWNNAGTGHSAFAELNYTPELQDGTIEIKRAIKIAEQFEISREFWSHQVRHGRLPAPTEFINATPHMSFVWGEDRIEYLRKRHNALIKNPLFYGMQFSTDPAVIQQWAPLLMEGRTQDQKVAATYMPLGTDVNFGVITRDLAKHLQDSQNFALHLDHEVTALRQNPDKTWNVTVKDLNNGQERSIKSRFVFIGAGGAALKLLQLSGIPESKDYAGFPVGGQFLSFENTAITKRHNVKAYGMAESGSPPMSVPHLDARKLDGKSIVLFGPFALYSTKFLKNGSWFDLYSSVNHHNAAGMLSVGKNNIDLVKYLMKQATLTDADRHAELLKYFPNAKPTDWTLVTAGQRVQIIKRDPEKGMILQFGTEIVMDKDHTLATLLGASPGASTSPSIMLDLLAKAFPQQMKNGWETQLKKIIPSYGQHINDSPALTNKIRRMTSETLSLPYLEVPDKSATPTDPTIAPKHQHSTTHNANSEMQAL</sequence>
<name>MQO_XYLFM</name>
<evidence type="ECO:0000255" key="1">
    <source>
        <dbReference type="HAMAP-Rule" id="MF_00212"/>
    </source>
</evidence>
<evidence type="ECO:0000256" key="2">
    <source>
        <dbReference type="SAM" id="MobiDB-lite"/>
    </source>
</evidence>
<proteinExistence type="inferred from homology"/>
<organism>
    <name type="scientific">Xylella fastidiosa (strain M12)</name>
    <dbReference type="NCBI Taxonomy" id="405440"/>
    <lineage>
        <taxon>Bacteria</taxon>
        <taxon>Pseudomonadati</taxon>
        <taxon>Pseudomonadota</taxon>
        <taxon>Gammaproteobacteria</taxon>
        <taxon>Lysobacterales</taxon>
        <taxon>Lysobacteraceae</taxon>
        <taxon>Xylella</taxon>
    </lineage>
</organism>
<accession>B0U4L2</accession>
<dbReference type="EC" id="1.1.5.4" evidence="1"/>
<dbReference type="EMBL" id="CP000941">
    <property type="protein sequence ID" value="ACA12791.1"/>
    <property type="molecule type" value="Genomic_DNA"/>
</dbReference>
<dbReference type="RefSeq" id="WP_004086424.1">
    <property type="nucleotide sequence ID" value="NC_010513.1"/>
</dbReference>
<dbReference type="SMR" id="B0U4L2"/>
<dbReference type="KEGG" id="xfm:Xfasm12_1915"/>
<dbReference type="HOGENOM" id="CLU_028151_0_0_6"/>
<dbReference type="UniPathway" id="UPA00223">
    <property type="reaction ID" value="UER01008"/>
</dbReference>
<dbReference type="GO" id="GO:0047545">
    <property type="term" value="F:2-hydroxyglutarate dehydrogenase activity"/>
    <property type="evidence" value="ECO:0007669"/>
    <property type="project" value="TreeGrafter"/>
</dbReference>
<dbReference type="GO" id="GO:0008924">
    <property type="term" value="F:L-malate dehydrogenase (quinone) activity"/>
    <property type="evidence" value="ECO:0007669"/>
    <property type="project" value="UniProtKB-UniRule"/>
</dbReference>
<dbReference type="GO" id="GO:0006099">
    <property type="term" value="P:tricarboxylic acid cycle"/>
    <property type="evidence" value="ECO:0007669"/>
    <property type="project" value="UniProtKB-UniRule"/>
</dbReference>
<dbReference type="Gene3D" id="3.30.9.10">
    <property type="entry name" value="D-Amino Acid Oxidase, subunit A, domain 2"/>
    <property type="match status" value="1"/>
</dbReference>
<dbReference type="Gene3D" id="3.50.50.60">
    <property type="entry name" value="FAD/NAD(P)-binding domain"/>
    <property type="match status" value="1"/>
</dbReference>
<dbReference type="HAMAP" id="MF_00212">
    <property type="entry name" value="MQO"/>
    <property type="match status" value="1"/>
</dbReference>
<dbReference type="InterPro" id="IPR036188">
    <property type="entry name" value="FAD/NAD-bd_sf"/>
</dbReference>
<dbReference type="InterPro" id="IPR006231">
    <property type="entry name" value="MQO"/>
</dbReference>
<dbReference type="NCBIfam" id="TIGR01320">
    <property type="entry name" value="mal_quin_oxido"/>
    <property type="match status" value="1"/>
</dbReference>
<dbReference type="NCBIfam" id="NF003603">
    <property type="entry name" value="PRK05257.1-1"/>
    <property type="match status" value="1"/>
</dbReference>
<dbReference type="NCBIfam" id="NF003605">
    <property type="entry name" value="PRK05257.1-4"/>
    <property type="match status" value="1"/>
</dbReference>
<dbReference type="NCBIfam" id="NF003606">
    <property type="entry name" value="PRK05257.2-1"/>
    <property type="match status" value="1"/>
</dbReference>
<dbReference type="NCBIfam" id="NF003611">
    <property type="entry name" value="PRK05257.3-2"/>
    <property type="match status" value="1"/>
</dbReference>
<dbReference type="NCBIfam" id="NF009875">
    <property type="entry name" value="PRK13339.1"/>
    <property type="match status" value="1"/>
</dbReference>
<dbReference type="PANTHER" id="PTHR43104">
    <property type="entry name" value="L-2-HYDROXYGLUTARATE DEHYDROGENASE, MITOCHONDRIAL"/>
    <property type="match status" value="1"/>
</dbReference>
<dbReference type="PANTHER" id="PTHR43104:SF2">
    <property type="entry name" value="L-2-HYDROXYGLUTARATE DEHYDROGENASE, MITOCHONDRIAL"/>
    <property type="match status" value="1"/>
</dbReference>
<dbReference type="Pfam" id="PF06039">
    <property type="entry name" value="Mqo"/>
    <property type="match status" value="1"/>
</dbReference>
<dbReference type="SUPFAM" id="SSF51905">
    <property type="entry name" value="FAD/NAD(P)-binding domain"/>
    <property type="match status" value="1"/>
</dbReference>
<gene>
    <name evidence="1" type="primary">mqo</name>
    <name type="ordered locus">Xfasm12_1915</name>
</gene>
<reference key="1">
    <citation type="journal article" date="2010" name="J. Bacteriol.">
        <title>Whole genome sequences of two Xylella fastidiosa strains (M12 and M23) causing almond leaf scorch disease in California.</title>
        <authorList>
            <person name="Chen J."/>
            <person name="Xie G."/>
            <person name="Han S."/>
            <person name="Chertkov O."/>
            <person name="Sims D."/>
            <person name="Civerolo E.L."/>
        </authorList>
    </citation>
    <scope>NUCLEOTIDE SEQUENCE [LARGE SCALE GENOMIC DNA]</scope>
    <source>
        <strain>M12</strain>
    </source>
</reference>
<comment type="catalytic activity">
    <reaction evidence="1">
        <text>(S)-malate + a quinone = a quinol + oxaloacetate</text>
        <dbReference type="Rhea" id="RHEA:46012"/>
        <dbReference type="ChEBI" id="CHEBI:15589"/>
        <dbReference type="ChEBI" id="CHEBI:16452"/>
        <dbReference type="ChEBI" id="CHEBI:24646"/>
        <dbReference type="ChEBI" id="CHEBI:132124"/>
        <dbReference type="EC" id="1.1.5.4"/>
    </reaction>
</comment>
<comment type="cofactor">
    <cofactor evidence="1">
        <name>FAD</name>
        <dbReference type="ChEBI" id="CHEBI:57692"/>
    </cofactor>
</comment>
<comment type="pathway">
    <text evidence="1">Carbohydrate metabolism; tricarboxylic acid cycle; oxaloacetate from (S)-malate (quinone route): step 1/1.</text>
</comment>
<comment type="similarity">
    <text evidence="1">Belongs to the MQO family.</text>
</comment>